<geneLocation type="plasmid">
    <name>R773</name>
</geneLocation>
<dbReference type="EMBL" id="U13073">
    <property type="protein sequence ID" value="AAA93060.1"/>
    <property type="molecule type" value="Genomic_DNA"/>
</dbReference>
<dbReference type="RefSeq" id="WP_032488785.1">
    <property type="nucleotide sequence ID" value="NZ_CBCRYQ010000030.1"/>
</dbReference>
<dbReference type="PDB" id="3KGK">
    <property type="method" value="X-ray"/>
    <property type="resolution" value="1.40 A"/>
    <property type="chains" value="A/B=1-109"/>
</dbReference>
<dbReference type="PDB" id="3MWH">
    <property type="method" value="X-ray"/>
    <property type="resolution" value="2.05 A"/>
    <property type="chains" value="A/B=1-109"/>
</dbReference>
<dbReference type="PDBsum" id="3KGK"/>
<dbReference type="PDBsum" id="3MWH"/>
<dbReference type="BMRB" id="P46003"/>
<dbReference type="SMR" id="P46003"/>
<dbReference type="DIP" id="DIP-16987N"/>
<dbReference type="BioCyc" id="MetaCyc:MONOMER-21686"/>
<dbReference type="EvolutionaryTrace" id="P46003"/>
<dbReference type="GO" id="GO:0003677">
    <property type="term" value="F:DNA binding"/>
    <property type="evidence" value="ECO:0007669"/>
    <property type="project" value="UniProtKB-KW"/>
</dbReference>
<dbReference type="GO" id="GO:0045892">
    <property type="term" value="P:negative regulation of DNA-templated transcription"/>
    <property type="evidence" value="ECO:0007669"/>
    <property type="project" value="InterPro"/>
</dbReference>
<dbReference type="GO" id="GO:0046685">
    <property type="term" value="P:response to arsenic-containing substance"/>
    <property type="evidence" value="ECO:0007669"/>
    <property type="project" value="UniProtKB-KW"/>
</dbReference>
<dbReference type="Gene3D" id="3.40.30.10">
    <property type="entry name" value="Glutaredoxin"/>
    <property type="match status" value="1"/>
</dbReference>
<dbReference type="InterPro" id="IPR010712">
    <property type="entry name" value="Arsenical-R_ArsD"/>
</dbReference>
<dbReference type="NCBIfam" id="NF033727">
    <property type="entry name" value="chaperon_ArsD"/>
    <property type="match status" value="1"/>
</dbReference>
<dbReference type="Pfam" id="PF06953">
    <property type="entry name" value="ArsD"/>
    <property type="match status" value="1"/>
</dbReference>
<reference key="1">
    <citation type="journal article" date="1993" name="Mol. Microbiol.">
        <title>The arsD gene encodes a second trans-acting regulatory protein of the plasmid-encoded arsenical resistance operon.</title>
        <authorList>
            <person name="Wu J."/>
            <person name="Rosen B.P."/>
        </authorList>
    </citation>
    <scope>NUCLEOTIDE SEQUENCE [GENOMIC DNA]</scope>
</reference>
<reference key="2">
    <citation type="submission" date="1996-03" db="EMBL/GenBank/DDBJ databases">
        <authorList>
            <person name="Wu J."/>
            <person name="Rosen B.P."/>
        </authorList>
    </citation>
    <scope>SEQUENCE REVISION</scope>
</reference>
<organism>
    <name type="scientific">Escherichia coli</name>
    <dbReference type="NCBI Taxonomy" id="562"/>
    <lineage>
        <taxon>Bacteria</taxon>
        <taxon>Pseudomonadati</taxon>
        <taxon>Pseudomonadota</taxon>
        <taxon>Gammaproteobacteria</taxon>
        <taxon>Enterobacterales</taxon>
        <taxon>Enterobacteriaceae</taxon>
        <taxon>Escherichia</taxon>
    </lineage>
</organism>
<comment type="function">
    <text>Inducer-independent trans-acting repressor of the ars operon.</text>
</comment>
<sequence>MKTLMVFDPAMCCSTGVCGTDVDQALVDFSTDVQWLKQCGVQIERFNLAQQPMSFVQNEKVKAFIEASGAEGLPLLLLDGETVMAGRYPKRAELARWFGIPLDKVGLAPSGCCGGNTSCC</sequence>
<evidence type="ECO:0007829" key="1">
    <source>
        <dbReference type="PDB" id="3KGK"/>
    </source>
</evidence>
<keyword id="KW-0002">3D-structure</keyword>
<keyword id="KW-0059">Arsenical resistance</keyword>
<keyword id="KW-0238">DNA-binding</keyword>
<keyword id="KW-0614">Plasmid</keyword>
<keyword id="KW-0678">Repressor</keyword>
<keyword id="KW-0804">Transcription</keyword>
<keyword id="KW-0805">Transcription regulation</keyword>
<name>ARSD1_ECOLX</name>
<accession>P46003</accession>
<feature type="chain" id="PRO_0000064662" description="Arsenical resistance operon trans-acting repressor ArsD">
    <location>
        <begin position="1"/>
        <end position="120"/>
    </location>
</feature>
<feature type="strand" evidence="1">
    <location>
        <begin position="4"/>
        <end position="8"/>
    </location>
</feature>
<feature type="helix" evidence="1">
    <location>
        <begin position="25"/>
        <end position="39"/>
    </location>
</feature>
<feature type="strand" evidence="1">
    <location>
        <begin position="43"/>
        <end position="47"/>
    </location>
</feature>
<feature type="turn" evidence="1">
    <location>
        <begin position="48"/>
        <end position="50"/>
    </location>
</feature>
<feature type="helix" evidence="1">
    <location>
        <begin position="54"/>
        <end position="57"/>
    </location>
</feature>
<feature type="helix" evidence="1">
    <location>
        <begin position="59"/>
        <end position="68"/>
    </location>
</feature>
<feature type="helix" evidence="1">
    <location>
        <begin position="70"/>
        <end position="72"/>
    </location>
</feature>
<feature type="strand" evidence="1">
    <location>
        <begin position="75"/>
        <end position="78"/>
    </location>
</feature>
<feature type="strand" evidence="1">
    <location>
        <begin position="81"/>
        <end position="87"/>
    </location>
</feature>
<feature type="helix" evidence="1">
    <location>
        <begin position="91"/>
        <end position="98"/>
    </location>
</feature>
<gene>
    <name type="primary">arsD</name>
</gene>
<protein>
    <recommendedName>
        <fullName>Arsenical resistance operon trans-acting repressor ArsD</fullName>
    </recommendedName>
</protein>
<proteinExistence type="evidence at protein level"/>